<evidence type="ECO:0000255" key="1"/>
<evidence type="ECO:0000255" key="2">
    <source>
        <dbReference type="PROSITE-ProRule" id="PRU00159"/>
    </source>
</evidence>
<evidence type="ECO:0000255" key="3">
    <source>
        <dbReference type="PROSITE-ProRule" id="PRU10027"/>
    </source>
</evidence>
<evidence type="ECO:0000256" key="4">
    <source>
        <dbReference type="SAM" id="MobiDB-lite"/>
    </source>
</evidence>
<evidence type="ECO:0000305" key="5"/>
<feature type="signal peptide" evidence="1">
    <location>
        <begin position="1"/>
        <end position="25"/>
    </location>
</feature>
<feature type="chain" id="PRO_0000389462" description="Probable leucine-rich repeat receptor-like protein kinase At5g49770">
    <location>
        <begin position="26"/>
        <end position="946"/>
    </location>
</feature>
<feature type="topological domain" description="Extracellular" evidence="1">
    <location>
        <begin position="26"/>
        <end position="561"/>
    </location>
</feature>
<feature type="transmembrane region" description="Helical" evidence="1">
    <location>
        <begin position="562"/>
        <end position="582"/>
    </location>
</feature>
<feature type="topological domain" description="Cytoplasmic" evidence="1">
    <location>
        <begin position="583"/>
        <end position="946"/>
    </location>
</feature>
<feature type="repeat" description="LRR 1">
    <location>
        <begin position="67"/>
        <end position="91"/>
    </location>
</feature>
<feature type="repeat" description="LRR 2">
    <location>
        <begin position="92"/>
        <end position="116"/>
    </location>
</feature>
<feature type="repeat" description="LRR 3">
    <location>
        <begin position="118"/>
        <end position="140"/>
    </location>
</feature>
<feature type="repeat" description="LRR 4">
    <location>
        <begin position="141"/>
        <end position="164"/>
    </location>
</feature>
<feature type="repeat" description="LRR 5">
    <location>
        <begin position="166"/>
        <end position="191"/>
    </location>
</feature>
<feature type="repeat" description="LRR 6">
    <location>
        <begin position="195"/>
        <end position="219"/>
    </location>
</feature>
<feature type="repeat" description="LRR 7">
    <location>
        <begin position="221"/>
        <end position="244"/>
    </location>
</feature>
<feature type="repeat" description="LRR 8">
    <location>
        <begin position="245"/>
        <end position="268"/>
    </location>
</feature>
<feature type="repeat" description="LRR 9">
    <location>
        <begin position="269"/>
        <end position="293"/>
    </location>
</feature>
<feature type="repeat" description="LRR 10">
    <location>
        <begin position="295"/>
        <end position="314"/>
    </location>
</feature>
<feature type="repeat" description="LRR 11">
    <location>
        <begin position="316"/>
        <end position="340"/>
    </location>
</feature>
<feature type="repeat" description="LRR 12">
    <location>
        <begin position="342"/>
        <end position="365"/>
    </location>
</feature>
<feature type="repeat" description="LRR 13">
    <location>
        <begin position="367"/>
        <end position="387"/>
    </location>
</feature>
<feature type="repeat" description="LRR 14">
    <location>
        <begin position="389"/>
        <end position="407"/>
    </location>
</feature>
<feature type="domain" description="Protein kinase" evidence="2">
    <location>
        <begin position="634"/>
        <end position="908"/>
    </location>
</feature>
<feature type="region of interest" description="Disordered" evidence="4">
    <location>
        <begin position="919"/>
        <end position="946"/>
    </location>
</feature>
<feature type="active site" description="Proton acceptor" evidence="2 3">
    <location>
        <position position="758"/>
    </location>
</feature>
<feature type="binding site" evidence="2">
    <location>
        <begin position="640"/>
        <end position="648"/>
    </location>
    <ligand>
        <name>ATP</name>
        <dbReference type="ChEBI" id="CHEBI:30616"/>
    </ligand>
</feature>
<feature type="binding site" evidence="2">
    <location>
        <position position="662"/>
    </location>
    <ligand>
        <name>ATP</name>
        <dbReference type="ChEBI" id="CHEBI:30616"/>
    </ligand>
</feature>
<feature type="glycosylation site" description="N-linked (GlcNAc...) asparagine" evidence="1">
    <location>
        <position position="246"/>
    </location>
</feature>
<feature type="glycosylation site" description="N-linked (GlcNAc...) asparagine" evidence="1">
    <location>
        <position position="267"/>
    </location>
</feature>
<feature type="glycosylation site" description="N-linked (GlcNAc...) asparagine" evidence="1">
    <location>
        <position position="287"/>
    </location>
</feature>
<feature type="glycosylation site" description="N-linked (GlcNAc...) asparagine" evidence="1">
    <location>
        <position position="354"/>
    </location>
</feature>
<feature type="glycosylation site" description="N-linked (GlcNAc...) asparagine" evidence="1">
    <location>
        <position position="362"/>
    </location>
</feature>
<feature type="glycosylation site" description="N-linked (GlcNAc...) asparagine" evidence="1">
    <location>
        <position position="415"/>
    </location>
</feature>
<feature type="glycosylation site" description="N-linked (GlcNAc...) asparagine" evidence="1">
    <location>
        <position position="460"/>
    </location>
</feature>
<feature type="glycosylation site" description="N-linked (GlcNAc...) asparagine" evidence="1">
    <location>
        <position position="489"/>
    </location>
</feature>
<feature type="glycosylation site" description="N-linked (GlcNAc...) asparagine" evidence="1">
    <location>
        <position position="514"/>
    </location>
</feature>
<keyword id="KW-0067">ATP-binding</keyword>
<keyword id="KW-0325">Glycoprotein</keyword>
<keyword id="KW-0418">Kinase</keyword>
<keyword id="KW-0433">Leucine-rich repeat</keyword>
<keyword id="KW-0472">Membrane</keyword>
<keyword id="KW-0547">Nucleotide-binding</keyword>
<keyword id="KW-0675">Receptor</keyword>
<keyword id="KW-1185">Reference proteome</keyword>
<keyword id="KW-0677">Repeat</keyword>
<keyword id="KW-0723">Serine/threonine-protein kinase</keyword>
<keyword id="KW-0732">Signal</keyword>
<keyword id="KW-0808">Transferase</keyword>
<keyword id="KW-0812">Transmembrane</keyword>
<keyword id="KW-1133">Transmembrane helix</keyword>
<accession>Q9LT96</accession>
<comment type="catalytic activity">
    <reaction>
        <text>L-seryl-[protein] + ATP = O-phospho-L-seryl-[protein] + ADP + H(+)</text>
        <dbReference type="Rhea" id="RHEA:17989"/>
        <dbReference type="Rhea" id="RHEA-COMP:9863"/>
        <dbReference type="Rhea" id="RHEA-COMP:11604"/>
        <dbReference type="ChEBI" id="CHEBI:15378"/>
        <dbReference type="ChEBI" id="CHEBI:29999"/>
        <dbReference type="ChEBI" id="CHEBI:30616"/>
        <dbReference type="ChEBI" id="CHEBI:83421"/>
        <dbReference type="ChEBI" id="CHEBI:456216"/>
        <dbReference type="EC" id="2.7.11.1"/>
    </reaction>
</comment>
<comment type="catalytic activity">
    <reaction>
        <text>L-threonyl-[protein] + ATP = O-phospho-L-threonyl-[protein] + ADP + H(+)</text>
        <dbReference type="Rhea" id="RHEA:46608"/>
        <dbReference type="Rhea" id="RHEA-COMP:11060"/>
        <dbReference type="Rhea" id="RHEA-COMP:11605"/>
        <dbReference type="ChEBI" id="CHEBI:15378"/>
        <dbReference type="ChEBI" id="CHEBI:30013"/>
        <dbReference type="ChEBI" id="CHEBI:30616"/>
        <dbReference type="ChEBI" id="CHEBI:61977"/>
        <dbReference type="ChEBI" id="CHEBI:456216"/>
        <dbReference type="EC" id="2.7.11.1"/>
    </reaction>
</comment>
<comment type="interaction">
    <interactant intactId="EBI-17123993">
        <id>Q9LT96</id>
    </interactant>
    <interactant intactId="EBI-20651261">
        <id>Q9SHI2</id>
        <label>At1g17230</label>
    </interactant>
    <organismsDiffer>false</organismsDiffer>
    <experiments>3</experiments>
</comment>
<comment type="interaction">
    <interactant intactId="EBI-17123993">
        <id>Q9LT96</id>
    </interactant>
    <interactant intactId="EBI-20651291">
        <id>Q9LP24-3</id>
        <label>At1g35710</label>
    </interactant>
    <organismsDiffer>false</organismsDiffer>
    <experiments>3</experiments>
</comment>
<comment type="interaction">
    <interactant intactId="EBI-17123993">
        <id>Q9LT96</id>
    </interactant>
    <interactant intactId="EBI-20651385">
        <id>Q9SH71</id>
        <label>At1g64210</label>
    </interactant>
    <organismsDiffer>false</organismsDiffer>
    <experiments>2</experiments>
</comment>
<comment type="interaction">
    <interactant intactId="EBI-17123993">
        <id>Q9LT96</id>
    </interactant>
    <interactant intactId="EBI-20653325">
        <id>O65440-2</id>
        <label>BAM3</label>
    </interactant>
    <organismsDiffer>false</organismsDiffer>
    <experiments>4</experiments>
</comment>
<comment type="interaction">
    <interactant intactId="EBI-17123993">
        <id>Q9LT96</id>
    </interactant>
    <interactant intactId="EBI-16196224">
        <id>Q9M0G7</id>
        <label>MIK1</label>
    </interactant>
    <organismsDiffer>false</organismsDiffer>
    <experiments>2</experiments>
</comment>
<comment type="interaction">
    <interactant intactId="EBI-17123993">
        <id>Q9LT96</id>
    </interactant>
    <interactant intactId="EBI-16914444">
        <id>Q9LJY0</id>
        <label>PRK4</label>
    </interactant>
    <organismsDiffer>false</organismsDiffer>
    <experiments>2</experiments>
</comment>
<comment type="interaction">
    <interactant intactId="EBI-17123993">
        <id>Q9LT96</id>
    </interactant>
    <interactant intactId="EBI-20660903">
        <id>Q9LHP4</id>
        <label>RGI1</label>
    </interactant>
    <organismsDiffer>false</organismsDiffer>
    <experiments>2</experiments>
</comment>
<comment type="interaction">
    <interactant intactId="EBI-17123993">
        <id>Q9LT96</id>
    </interactant>
    <interactant intactId="EBI-1544507">
        <id>Q9LP77</id>
        <label>RKL1</label>
    </interactant>
    <organismsDiffer>false</organismsDiffer>
    <experiments>3</experiments>
</comment>
<comment type="interaction">
    <interactant intactId="EBI-17123993">
        <id>Q9LT96</id>
    </interactant>
    <interactant intactId="EBI-20651307">
        <id>F4I2N7-2</id>
        <label>RLK7</label>
    </interactant>
    <organismsDiffer>false</organismsDiffer>
    <experiments>3</experiments>
</comment>
<comment type="interaction">
    <interactant intactId="EBI-17123993">
        <id>Q9LT96</id>
    </interactant>
    <interactant intactId="EBI-1626936">
        <id>Q9LVI6</id>
        <label>RLK902</label>
    </interactant>
    <organismsDiffer>false</organismsDiffer>
    <experiments>2</experiments>
</comment>
<comment type="interaction">
    <interactant intactId="EBI-17123993">
        <id>Q9LT96</id>
    </interactant>
    <interactant intactId="EBI-20664575">
        <id>Q9LK43</id>
        <label>TMK4</label>
    </interactant>
    <organismsDiffer>false</organismsDiffer>
    <experiments>4</experiments>
</comment>
<comment type="subcellular location">
    <subcellularLocation>
        <location evidence="5">Membrane</location>
        <topology evidence="5">Single-pass type I membrane protein</topology>
    </subcellularLocation>
</comment>
<comment type="similarity">
    <text evidence="2">Belongs to the protein kinase superfamily. Ser/Thr protein kinase family.</text>
</comment>
<protein>
    <recommendedName>
        <fullName>Probable leucine-rich repeat receptor-like protein kinase At5g49770</fullName>
        <ecNumber>2.7.11.1</ecNumber>
    </recommendedName>
</protein>
<dbReference type="EC" id="2.7.11.1"/>
<dbReference type="EMBL" id="AB025613">
    <property type="protein sequence ID" value="BAA98165.1"/>
    <property type="molecule type" value="Genomic_DNA"/>
</dbReference>
<dbReference type="EMBL" id="CP002688">
    <property type="protein sequence ID" value="AED95855.1"/>
    <property type="molecule type" value="Genomic_DNA"/>
</dbReference>
<dbReference type="EMBL" id="FJ708798">
    <property type="protein sequence ID" value="ACN59389.1"/>
    <property type="molecule type" value="mRNA"/>
</dbReference>
<dbReference type="RefSeq" id="NP_199788.1">
    <property type="nucleotide sequence ID" value="NM_124355.3"/>
</dbReference>
<dbReference type="SMR" id="Q9LT96"/>
<dbReference type="BioGRID" id="20286">
    <property type="interactions" value="30"/>
</dbReference>
<dbReference type="FunCoup" id="Q9LT96">
    <property type="interactions" value="224"/>
</dbReference>
<dbReference type="IntAct" id="Q9LT96">
    <property type="interactions" value="40"/>
</dbReference>
<dbReference type="STRING" id="3702.Q9LT96"/>
<dbReference type="GlyGen" id="Q9LT96">
    <property type="glycosylation" value="10 sites"/>
</dbReference>
<dbReference type="iPTMnet" id="Q9LT96"/>
<dbReference type="PaxDb" id="3702-AT5G49770.1"/>
<dbReference type="ProteomicsDB" id="243143"/>
<dbReference type="EnsemblPlants" id="AT5G49770.1">
    <property type="protein sequence ID" value="AT5G49770.1"/>
    <property type="gene ID" value="AT5G49770"/>
</dbReference>
<dbReference type="GeneID" id="835040"/>
<dbReference type="Gramene" id="AT5G49770.1">
    <property type="protein sequence ID" value="AT5G49770.1"/>
    <property type="gene ID" value="AT5G49770"/>
</dbReference>
<dbReference type="KEGG" id="ath:AT5G49770"/>
<dbReference type="Araport" id="AT5G49770"/>
<dbReference type="TAIR" id="AT5G49770"/>
<dbReference type="eggNOG" id="ENOG502QQH6">
    <property type="taxonomic scope" value="Eukaryota"/>
</dbReference>
<dbReference type="HOGENOM" id="CLU_000288_14_1_1"/>
<dbReference type="InParanoid" id="Q9LT96"/>
<dbReference type="OMA" id="WIGIICI"/>
<dbReference type="PhylomeDB" id="Q9LT96"/>
<dbReference type="PRO" id="PR:Q9LT96"/>
<dbReference type="Proteomes" id="UP000006548">
    <property type="component" value="Chromosome 5"/>
</dbReference>
<dbReference type="ExpressionAtlas" id="Q9LT96">
    <property type="expression patterns" value="baseline and differential"/>
</dbReference>
<dbReference type="GO" id="GO:0016020">
    <property type="term" value="C:membrane"/>
    <property type="evidence" value="ECO:0007669"/>
    <property type="project" value="UniProtKB-SubCell"/>
</dbReference>
<dbReference type="GO" id="GO:0009536">
    <property type="term" value="C:plastid"/>
    <property type="evidence" value="ECO:0007005"/>
    <property type="project" value="TAIR"/>
</dbReference>
<dbReference type="GO" id="GO:0005524">
    <property type="term" value="F:ATP binding"/>
    <property type="evidence" value="ECO:0007669"/>
    <property type="project" value="UniProtKB-KW"/>
</dbReference>
<dbReference type="GO" id="GO:0106310">
    <property type="term" value="F:protein serine kinase activity"/>
    <property type="evidence" value="ECO:0007669"/>
    <property type="project" value="RHEA"/>
</dbReference>
<dbReference type="GO" id="GO:0004674">
    <property type="term" value="F:protein serine/threonine kinase activity"/>
    <property type="evidence" value="ECO:0007669"/>
    <property type="project" value="UniProtKB-KW"/>
</dbReference>
<dbReference type="CDD" id="cd14066">
    <property type="entry name" value="STKc_IRAK"/>
    <property type="match status" value="1"/>
</dbReference>
<dbReference type="FunFam" id="3.80.10.10:FF:000363">
    <property type="entry name" value="Leucine-rich repeat family protein"/>
    <property type="match status" value="1"/>
</dbReference>
<dbReference type="FunFam" id="3.30.200.20:FF:000328">
    <property type="entry name" value="Leucine-rich repeat protein kinase family protein"/>
    <property type="match status" value="1"/>
</dbReference>
<dbReference type="FunFam" id="3.80.10.10:FF:000542">
    <property type="entry name" value="Leucine-rich repeat protein kinase family protein"/>
    <property type="match status" value="1"/>
</dbReference>
<dbReference type="FunFam" id="1.10.510.10:FF:000453">
    <property type="entry name" value="LRR receptor-like serine/threonine-protein kinase HSL2"/>
    <property type="match status" value="1"/>
</dbReference>
<dbReference type="Gene3D" id="3.30.200.20">
    <property type="entry name" value="Phosphorylase Kinase, domain 1"/>
    <property type="match status" value="1"/>
</dbReference>
<dbReference type="Gene3D" id="3.80.10.10">
    <property type="entry name" value="Ribonuclease Inhibitor"/>
    <property type="match status" value="2"/>
</dbReference>
<dbReference type="Gene3D" id="1.10.510.10">
    <property type="entry name" value="Transferase(Phosphotransferase) domain 1"/>
    <property type="match status" value="1"/>
</dbReference>
<dbReference type="InterPro" id="IPR011009">
    <property type="entry name" value="Kinase-like_dom_sf"/>
</dbReference>
<dbReference type="InterPro" id="IPR001611">
    <property type="entry name" value="Leu-rich_rpt"/>
</dbReference>
<dbReference type="InterPro" id="IPR025875">
    <property type="entry name" value="Leu-rich_rpt_4"/>
</dbReference>
<dbReference type="InterPro" id="IPR032675">
    <property type="entry name" value="LRR_dom_sf"/>
</dbReference>
<dbReference type="InterPro" id="IPR013210">
    <property type="entry name" value="LRR_N_plant-typ"/>
</dbReference>
<dbReference type="InterPro" id="IPR055414">
    <property type="entry name" value="LRR_R13L4/SHOC2-like"/>
</dbReference>
<dbReference type="InterPro" id="IPR000719">
    <property type="entry name" value="Prot_kinase_dom"/>
</dbReference>
<dbReference type="InterPro" id="IPR017441">
    <property type="entry name" value="Protein_kinase_ATP_BS"/>
</dbReference>
<dbReference type="InterPro" id="IPR001245">
    <property type="entry name" value="Ser-Thr/Tyr_kinase_cat_dom"/>
</dbReference>
<dbReference type="InterPro" id="IPR008271">
    <property type="entry name" value="Ser/Thr_kinase_AS"/>
</dbReference>
<dbReference type="PANTHER" id="PTHR45974:SF266">
    <property type="entry name" value="LEUCINE-RICH REPEAT RECEPTOR PROTEIN KINASE HPCA1"/>
    <property type="match status" value="1"/>
</dbReference>
<dbReference type="PANTHER" id="PTHR45974">
    <property type="entry name" value="RECEPTOR-LIKE PROTEIN 55"/>
    <property type="match status" value="1"/>
</dbReference>
<dbReference type="Pfam" id="PF00560">
    <property type="entry name" value="LRR_1"/>
    <property type="match status" value="1"/>
</dbReference>
<dbReference type="Pfam" id="PF23598">
    <property type="entry name" value="LRR_14"/>
    <property type="match status" value="1"/>
</dbReference>
<dbReference type="Pfam" id="PF12799">
    <property type="entry name" value="LRR_4"/>
    <property type="match status" value="1"/>
</dbReference>
<dbReference type="Pfam" id="PF08263">
    <property type="entry name" value="LRRNT_2"/>
    <property type="match status" value="1"/>
</dbReference>
<dbReference type="Pfam" id="PF07714">
    <property type="entry name" value="PK_Tyr_Ser-Thr"/>
    <property type="match status" value="1"/>
</dbReference>
<dbReference type="SMART" id="SM00220">
    <property type="entry name" value="S_TKc"/>
    <property type="match status" value="1"/>
</dbReference>
<dbReference type="SUPFAM" id="SSF52058">
    <property type="entry name" value="L domain-like"/>
    <property type="match status" value="1"/>
</dbReference>
<dbReference type="SUPFAM" id="SSF56112">
    <property type="entry name" value="Protein kinase-like (PK-like)"/>
    <property type="match status" value="1"/>
</dbReference>
<dbReference type="PROSITE" id="PS51450">
    <property type="entry name" value="LRR"/>
    <property type="match status" value="4"/>
</dbReference>
<dbReference type="PROSITE" id="PS00107">
    <property type="entry name" value="PROTEIN_KINASE_ATP"/>
    <property type="match status" value="1"/>
</dbReference>
<dbReference type="PROSITE" id="PS50011">
    <property type="entry name" value="PROTEIN_KINASE_DOM"/>
    <property type="match status" value="1"/>
</dbReference>
<dbReference type="PROSITE" id="PS00108">
    <property type="entry name" value="PROTEIN_KINASE_ST"/>
    <property type="match status" value="1"/>
</dbReference>
<proteinExistence type="evidence at protein level"/>
<reference key="1">
    <citation type="submission" date="1999-04" db="EMBL/GenBank/DDBJ databases">
        <title>Structural analysis of Arabidopsis thaliana chromosome 5. XI.</title>
        <authorList>
            <person name="Kaneko T."/>
            <person name="Katoh T."/>
            <person name="Asamizu E."/>
            <person name="Sato S."/>
            <person name="Nakamura Y."/>
            <person name="Kotani H."/>
            <person name="Tabata S."/>
        </authorList>
    </citation>
    <scope>NUCLEOTIDE SEQUENCE [LARGE SCALE GENOMIC DNA]</scope>
    <source>
        <strain>cv. Columbia</strain>
    </source>
</reference>
<reference key="2">
    <citation type="journal article" date="2017" name="Plant J.">
        <title>Araport11: a complete reannotation of the Arabidopsis thaliana reference genome.</title>
        <authorList>
            <person name="Cheng C.Y."/>
            <person name="Krishnakumar V."/>
            <person name="Chan A.P."/>
            <person name="Thibaud-Nissen F."/>
            <person name="Schobel S."/>
            <person name="Town C.D."/>
        </authorList>
    </citation>
    <scope>GENOME REANNOTATION</scope>
    <source>
        <strain>cv. Columbia</strain>
    </source>
</reference>
<reference key="3">
    <citation type="journal article" date="2010" name="BMC Genomics">
        <title>Genome-wide cloning and sequence analysis of leucine-rich repeat receptor-like protein kinase genes in Arabidopsis thaliana.</title>
        <authorList>
            <person name="Gou X."/>
            <person name="He K."/>
            <person name="Yang H."/>
            <person name="Yuan T."/>
            <person name="Lin H."/>
            <person name="Clouse S.D."/>
            <person name="Li J."/>
        </authorList>
    </citation>
    <scope>NUCLEOTIDE SEQUENCE [LARGE SCALE MRNA]</scope>
    <source>
        <strain>cv. Columbia</strain>
    </source>
</reference>
<gene>
    <name type="ordered locus">At5g49770</name>
    <name type="ORF">K2I5.14</name>
</gene>
<name>Y5977_ARATH</name>
<organism>
    <name type="scientific">Arabidopsis thaliana</name>
    <name type="common">Mouse-ear cress</name>
    <dbReference type="NCBI Taxonomy" id="3702"/>
    <lineage>
        <taxon>Eukaryota</taxon>
        <taxon>Viridiplantae</taxon>
        <taxon>Streptophyta</taxon>
        <taxon>Embryophyta</taxon>
        <taxon>Tracheophyta</taxon>
        <taxon>Spermatophyta</taxon>
        <taxon>Magnoliopsida</taxon>
        <taxon>eudicotyledons</taxon>
        <taxon>Gunneridae</taxon>
        <taxon>Pentapetalae</taxon>
        <taxon>rosids</taxon>
        <taxon>malvids</taxon>
        <taxon>Brassicales</taxon>
        <taxon>Brassicaceae</taxon>
        <taxon>Camelineae</taxon>
        <taxon>Arabidopsis</taxon>
    </lineage>
</organism>
<sequence length="946" mass="104523">MKMSSRIGLFKLLILLFFQIYSVYAFTDGSDFTALQALKNEWDTLSKSWKSSDPCGTEWVGITCNNDNRVVSISLTNRNLKGKLPTEISTLSELQTLDLTGNPELSGPLPANIGNLRKLTFLSLMGCAFNGPIPDSIGNLEQLTRLSLNLNKFSGTIPASMGRLSKLYWFDIADNQLEGKLPVSDGASLPGLDMLLQTGHFHFGNNKLSGEIPEKLFSSEMTLLHVLFDGNQFTGSIPESLGLVQNLTVLRLDRNRLSGDIPSSLNNLTNLQELHLSDNKFTGSLPNLTSLTSLYTLDVSNNPLALSPVPSWIPFLNSLSTLRLEDIQLDGPVPTSLFSPLQLQTVSLKHNLINTTLDLGTNYSKQLDFVDLRDNFITGYKSPANNPVNVMLADNQVCQDPANQLSGYCNAVQPNSTFSTLTKCGNHCGKGKEPNQGCHCVYPLTGVFTLRSPSFSGFSNNSNFLKFGESLMTFFKNGKYPVDSVAMRNISENPTDYHLLINLLIFPSGRDRFNQTEMDSINSAFTIQDYKPPPRFGPYIFVADQYKTFSDLEDSKTVSMKVIIGVVVGVVVLLLLLALAGIYALRQKKRAQRATDQMNPFAKWDAGKNEMDAPQLMGTKAFTFEELSKCTNNFSDANDVGGGGYGQVYKGTLPNGQVIAIKRAQQGSMQGAFEFKTEIELLSRVHHKNVVKLLGFCFDQKEQMLVYEYIPNGSLRDGLSGKNGVKLDWTRRLKIALGSGKGLAYLHELADPPIIHRDVKSNNILLDEHLTAKVADFGLSKLVGDPEKAHVTTQVKGTMGYLDPEYYMTNQLTEKSDVYGFGVVMLELLTGKSPIDRGSYVVKEVKKKMDKSRNLYDLQELLDTTIIQNSGNLKGFEKYVDVALQCVEPEGVNRPTMSEVVQELESILRLVGLNPNADSATYEEASGDPYGRDSFEYTGVFPTPKP</sequence>